<gene>
    <name evidence="1" type="primary">rpsJ</name>
    <name type="ordered locus">CTA_0476</name>
</gene>
<reference key="1">
    <citation type="journal article" date="2005" name="Infect. Immun.">
        <title>Comparative genomic analysis of Chlamydia trachomatis oculotropic and genitotropic strains.</title>
        <authorList>
            <person name="Carlson J.H."/>
            <person name="Porcella S.F."/>
            <person name="McClarty G."/>
            <person name="Caldwell H.D."/>
        </authorList>
    </citation>
    <scope>NUCLEOTIDE SEQUENCE [LARGE SCALE GENOMIC DNA]</scope>
    <source>
        <strain>ATCC VR-571B / DSM 19440 / HAR-13</strain>
    </source>
</reference>
<accession>Q3KLR4</accession>
<protein>
    <recommendedName>
        <fullName evidence="1">Small ribosomal subunit protein uS10</fullName>
    </recommendedName>
    <alternativeName>
        <fullName evidence="2">30S ribosomal protein S10</fullName>
    </alternativeName>
</protein>
<feature type="chain" id="PRO_0000237030" description="Small ribosomal subunit protein uS10">
    <location>
        <begin position="1"/>
        <end position="105"/>
    </location>
</feature>
<dbReference type="EMBL" id="CP000051">
    <property type="protein sequence ID" value="AAX50708.1"/>
    <property type="molecule type" value="Genomic_DNA"/>
</dbReference>
<dbReference type="RefSeq" id="WP_009871791.1">
    <property type="nucleotide sequence ID" value="NC_007429.1"/>
</dbReference>
<dbReference type="SMR" id="Q3KLR4"/>
<dbReference type="GeneID" id="93065269"/>
<dbReference type="KEGG" id="cta:CTA_0476"/>
<dbReference type="HOGENOM" id="CLU_122625_1_3_0"/>
<dbReference type="Proteomes" id="UP000002532">
    <property type="component" value="Chromosome"/>
</dbReference>
<dbReference type="GO" id="GO:1990904">
    <property type="term" value="C:ribonucleoprotein complex"/>
    <property type="evidence" value="ECO:0007669"/>
    <property type="project" value="UniProtKB-KW"/>
</dbReference>
<dbReference type="GO" id="GO:0005840">
    <property type="term" value="C:ribosome"/>
    <property type="evidence" value="ECO:0007669"/>
    <property type="project" value="UniProtKB-KW"/>
</dbReference>
<dbReference type="GO" id="GO:0003735">
    <property type="term" value="F:structural constituent of ribosome"/>
    <property type="evidence" value="ECO:0007669"/>
    <property type="project" value="InterPro"/>
</dbReference>
<dbReference type="GO" id="GO:0000049">
    <property type="term" value="F:tRNA binding"/>
    <property type="evidence" value="ECO:0007669"/>
    <property type="project" value="UniProtKB-UniRule"/>
</dbReference>
<dbReference type="GO" id="GO:0006412">
    <property type="term" value="P:translation"/>
    <property type="evidence" value="ECO:0007669"/>
    <property type="project" value="UniProtKB-UniRule"/>
</dbReference>
<dbReference type="FunFam" id="3.30.70.600:FF:000001">
    <property type="entry name" value="30S ribosomal protein S10"/>
    <property type="match status" value="1"/>
</dbReference>
<dbReference type="Gene3D" id="3.30.70.600">
    <property type="entry name" value="Ribosomal protein S10 domain"/>
    <property type="match status" value="1"/>
</dbReference>
<dbReference type="HAMAP" id="MF_00508">
    <property type="entry name" value="Ribosomal_uS10"/>
    <property type="match status" value="1"/>
</dbReference>
<dbReference type="InterPro" id="IPR001848">
    <property type="entry name" value="Ribosomal_uS10"/>
</dbReference>
<dbReference type="InterPro" id="IPR018268">
    <property type="entry name" value="Ribosomal_uS10_CS"/>
</dbReference>
<dbReference type="InterPro" id="IPR027486">
    <property type="entry name" value="Ribosomal_uS10_dom"/>
</dbReference>
<dbReference type="InterPro" id="IPR036838">
    <property type="entry name" value="Ribosomal_uS10_dom_sf"/>
</dbReference>
<dbReference type="NCBIfam" id="NF001861">
    <property type="entry name" value="PRK00596.1"/>
    <property type="match status" value="1"/>
</dbReference>
<dbReference type="NCBIfam" id="TIGR01049">
    <property type="entry name" value="rpsJ_bact"/>
    <property type="match status" value="1"/>
</dbReference>
<dbReference type="PANTHER" id="PTHR11700">
    <property type="entry name" value="30S RIBOSOMAL PROTEIN S10 FAMILY MEMBER"/>
    <property type="match status" value="1"/>
</dbReference>
<dbReference type="Pfam" id="PF00338">
    <property type="entry name" value="Ribosomal_S10"/>
    <property type="match status" value="1"/>
</dbReference>
<dbReference type="PRINTS" id="PR00971">
    <property type="entry name" value="RIBOSOMALS10"/>
</dbReference>
<dbReference type="SMART" id="SM01403">
    <property type="entry name" value="Ribosomal_S10"/>
    <property type="match status" value="1"/>
</dbReference>
<dbReference type="SUPFAM" id="SSF54999">
    <property type="entry name" value="Ribosomal protein S10"/>
    <property type="match status" value="1"/>
</dbReference>
<dbReference type="PROSITE" id="PS00361">
    <property type="entry name" value="RIBOSOMAL_S10"/>
    <property type="match status" value="1"/>
</dbReference>
<evidence type="ECO:0000255" key="1">
    <source>
        <dbReference type="HAMAP-Rule" id="MF_00508"/>
    </source>
</evidence>
<evidence type="ECO:0000305" key="2"/>
<keyword id="KW-0687">Ribonucleoprotein</keyword>
<keyword id="KW-0689">Ribosomal protein</keyword>
<name>RS10_CHLTA</name>
<comment type="function">
    <text evidence="1">Involved in the binding of tRNA to the ribosomes.</text>
</comment>
<comment type="subunit">
    <text evidence="1">Part of the 30S ribosomal subunit.</text>
</comment>
<comment type="similarity">
    <text evidence="1">Belongs to the universal ribosomal protein uS10 family.</text>
</comment>
<sequence length="105" mass="11869">MKQQKQRIRIRLKGFDQGQLDQSTANIVETAKRTGARVVGPIPLPTKREVYTVLRSPHVDKKSREQFEIRTHKRLIDILDPTGKTIDALKMLSLPAGVDIKIKAA</sequence>
<organism>
    <name type="scientific">Chlamydia trachomatis serovar A (strain ATCC VR-571B / DSM 19440 / HAR-13)</name>
    <dbReference type="NCBI Taxonomy" id="315277"/>
    <lineage>
        <taxon>Bacteria</taxon>
        <taxon>Pseudomonadati</taxon>
        <taxon>Chlamydiota</taxon>
        <taxon>Chlamydiia</taxon>
        <taxon>Chlamydiales</taxon>
        <taxon>Chlamydiaceae</taxon>
        <taxon>Chlamydia/Chlamydophila group</taxon>
        <taxon>Chlamydia</taxon>
    </lineage>
</organism>
<proteinExistence type="inferred from homology"/>